<dbReference type="EMBL" id="AE008691">
    <property type="protein sequence ID" value="AAM23663.1"/>
    <property type="molecule type" value="Genomic_DNA"/>
</dbReference>
<dbReference type="RefSeq" id="WP_011024820.1">
    <property type="nucleotide sequence ID" value="NC_003869.1"/>
</dbReference>
<dbReference type="SMR" id="Q8RCP3"/>
<dbReference type="STRING" id="273068.TTE0376"/>
<dbReference type="KEGG" id="tte:TTE0376"/>
<dbReference type="eggNOG" id="COG1492">
    <property type="taxonomic scope" value="Bacteria"/>
</dbReference>
<dbReference type="HOGENOM" id="CLU_019250_2_2_9"/>
<dbReference type="OrthoDB" id="9808302at2"/>
<dbReference type="UniPathway" id="UPA00148"/>
<dbReference type="Proteomes" id="UP000000555">
    <property type="component" value="Chromosome"/>
</dbReference>
<dbReference type="GO" id="GO:0015420">
    <property type="term" value="F:ABC-type vitamin B12 transporter activity"/>
    <property type="evidence" value="ECO:0007669"/>
    <property type="project" value="UniProtKB-UniRule"/>
</dbReference>
<dbReference type="GO" id="GO:0003824">
    <property type="term" value="F:catalytic activity"/>
    <property type="evidence" value="ECO:0007669"/>
    <property type="project" value="InterPro"/>
</dbReference>
<dbReference type="GO" id="GO:0009236">
    <property type="term" value="P:cobalamin biosynthetic process"/>
    <property type="evidence" value="ECO:0007669"/>
    <property type="project" value="UniProtKB-UniRule"/>
</dbReference>
<dbReference type="CDD" id="cd05389">
    <property type="entry name" value="CobQ_N"/>
    <property type="match status" value="1"/>
</dbReference>
<dbReference type="CDD" id="cd01750">
    <property type="entry name" value="GATase1_CobQ"/>
    <property type="match status" value="1"/>
</dbReference>
<dbReference type="Gene3D" id="3.40.50.880">
    <property type="match status" value="1"/>
</dbReference>
<dbReference type="Gene3D" id="3.40.50.300">
    <property type="entry name" value="P-loop containing nucleotide triphosphate hydrolases"/>
    <property type="match status" value="1"/>
</dbReference>
<dbReference type="HAMAP" id="MF_00028">
    <property type="entry name" value="CobQ"/>
    <property type="match status" value="1"/>
</dbReference>
<dbReference type="InterPro" id="IPR029062">
    <property type="entry name" value="Class_I_gatase-like"/>
</dbReference>
<dbReference type="InterPro" id="IPR002586">
    <property type="entry name" value="CobQ/CobB/MinD/ParA_Nub-bd_dom"/>
</dbReference>
<dbReference type="InterPro" id="IPR033949">
    <property type="entry name" value="CobQ_GATase1"/>
</dbReference>
<dbReference type="InterPro" id="IPR047045">
    <property type="entry name" value="CobQ_N"/>
</dbReference>
<dbReference type="InterPro" id="IPR004459">
    <property type="entry name" value="CobQ_synth"/>
</dbReference>
<dbReference type="InterPro" id="IPR011698">
    <property type="entry name" value="GATase_3"/>
</dbReference>
<dbReference type="InterPro" id="IPR027417">
    <property type="entry name" value="P-loop_NTPase"/>
</dbReference>
<dbReference type="NCBIfam" id="TIGR00313">
    <property type="entry name" value="cobQ"/>
    <property type="match status" value="1"/>
</dbReference>
<dbReference type="NCBIfam" id="NF001989">
    <property type="entry name" value="PRK00784.1"/>
    <property type="match status" value="1"/>
</dbReference>
<dbReference type="PANTHER" id="PTHR21343:SF1">
    <property type="entry name" value="COBYRIC ACID SYNTHASE"/>
    <property type="match status" value="1"/>
</dbReference>
<dbReference type="PANTHER" id="PTHR21343">
    <property type="entry name" value="DETHIOBIOTIN SYNTHETASE"/>
    <property type="match status" value="1"/>
</dbReference>
<dbReference type="Pfam" id="PF01656">
    <property type="entry name" value="CbiA"/>
    <property type="match status" value="1"/>
</dbReference>
<dbReference type="Pfam" id="PF07685">
    <property type="entry name" value="GATase_3"/>
    <property type="match status" value="1"/>
</dbReference>
<dbReference type="SUPFAM" id="SSF52317">
    <property type="entry name" value="Class I glutamine amidotransferase-like"/>
    <property type="match status" value="1"/>
</dbReference>
<dbReference type="SUPFAM" id="SSF52540">
    <property type="entry name" value="P-loop containing nucleoside triphosphate hydrolases"/>
    <property type="match status" value="1"/>
</dbReference>
<dbReference type="PROSITE" id="PS51274">
    <property type="entry name" value="GATASE_COBBQ"/>
    <property type="match status" value="1"/>
</dbReference>
<proteinExistence type="inferred from homology"/>
<gene>
    <name evidence="1" type="primary">cobQ</name>
    <name type="ordered locus">TTE0376</name>
</gene>
<keyword id="KW-0169">Cobalamin biosynthesis</keyword>
<keyword id="KW-0315">Glutamine amidotransferase</keyword>
<keyword id="KW-1185">Reference proteome</keyword>
<reference key="1">
    <citation type="journal article" date="2002" name="Genome Res.">
        <title>A complete sequence of the T. tengcongensis genome.</title>
        <authorList>
            <person name="Bao Q."/>
            <person name="Tian Y."/>
            <person name="Li W."/>
            <person name="Xu Z."/>
            <person name="Xuan Z."/>
            <person name="Hu S."/>
            <person name="Dong W."/>
            <person name="Yang J."/>
            <person name="Chen Y."/>
            <person name="Xue Y."/>
            <person name="Xu Y."/>
            <person name="Lai X."/>
            <person name="Huang L."/>
            <person name="Dong X."/>
            <person name="Ma Y."/>
            <person name="Ling L."/>
            <person name="Tan H."/>
            <person name="Chen R."/>
            <person name="Wang J."/>
            <person name="Yu J."/>
            <person name="Yang H."/>
        </authorList>
    </citation>
    <scope>NUCLEOTIDE SEQUENCE [LARGE SCALE GENOMIC DNA]</scope>
    <source>
        <strain>DSM 15242 / JCM 11007 / NBRC 100824 / MB4</strain>
    </source>
</reference>
<name>COBQ_CALS4</name>
<comment type="function">
    <text evidence="1">Catalyzes amidations at positions B, D, E, and G on adenosylcobyrinic A,C-diamide. NH(2) groups are provided by glutamine, and one molecule of ATP is hydrogenolyzed for each amidation.</text>
</comment>
<comment type="pathway">
    <text evidence="1">Cofactor biosynthesis; adenosylcobalamin biosynthesis.</text>
</comment>
<comment type="similarity">
    <text evidence="1">Belongs to the CobB/CobQ family. CobQ subfamily.</text>
</comment>
<sequence length="508" mass="57010">MALKLMIQGTASSVGKSLIVTALCRIFKQDGLKVAPFKSQNMALNSYITEEGLEIGRAQAVQAEAAGIKPSYHMNPILLKPSSDKKSQVVLRGRVYENMSAEEYFKFRPKLLELIKEDFDFLAKRNDVVVIEGAGSPAEINLKEKDIVNMGLAELVNAPVLLVGDIDRGGVFASIAGTMLLLDEKERNRVEGVIINKFRGDIEILKPGLKMLENIIQKEVLGVIPYMDVHIDEEDGATDRFYTKCAQGEVDVAIINLPHISNFTDFDPLTKVPGVKIKYVNKGERIGDCDVLIIPGTKNTIGDLKVLKDYGLDKEILNLREKGKFIVGICGGFQMLGKVIKDPYHIESDTEEMEGLGLLSIETVIEREKTTSETKAFLGEELPDTLSSLKGLFVTGYEIHMGESYILGKGKHFSIVVERNKEKVKVLDGAVSEDGRVFGTYIHGIFENSLFTKEFINIVRKEKGLTPLEEVINYREFREKEYDRLANIVRNSLDMERIYQIMERYRDK</sequence>
<feature type="chain" id="PRO_0000141337" description="Cobyric acid synthase">
    <location>
        <begin position="1"/>
        <end position="508"/>
    </location>
</feature>
<feature type="domain" description="GATase cobBQ-type" evidence="1">
    <location>
        <begin position="249"/>
        <end position="451"/>
    </location>
</feature>
<feature type="active site" description="Nucleophile" evidence="1">
    <location>
        <position position="330"/>
    </location>
</feature>
<feature type="active site" evidence="1">
    <location>
        <position position="443"/>
    </location>
</feature>
<organism>
    <name type="scientific">Caldanaerobacter subterraneus subsp. tengcongensis (strain DSM 15242 / JCM 11007 / NBRC 100824 / MB4)</name>
    <name type="common">Thermoanaerobacter tengcongensis</name>
    <dbReference type="NCBI Taxonomy" id="273068"/>
    <lineage>
        <taxon>Bacteria</taxon>
        <taxon>Bacillati</taxon>
        <taxon>Bacillota</taxon>
        <taxon>Clostridia</taxon>
        <taxon>Thermoanaerobacterales</taxon>
        <taxon>Thermoanaerobacteraceae</taxon>
        <taxon>Caldanaerobacter</taxon>
    </lineage>
</organism>
<accession>Q8RCP3</accession>
<evidence type="ECO:0000255" key="1">
    <source>
        <dbReference type="HAMAP-Rule" id="MF_00028"/>
    </source>
</evidence>
<protein>
    <recommendedName>
        <fullName evidence="1">Cobyric acid synthase</fullName>
    </recommendedName>
</protein>